<dbReference type="EC" id="3.1.3.16"/>
<dbReference type="EMBL" id="CT868060">
    <property type="protein sequence ID" value="CAK68449.1"/>
    <property type="molecule type" value="Genomic_DNA"/>
</dbReference>
<dbReference type="RefSeq" id="XP_001435846.1">
    <property type="nucleotide sequence ID" value="XM_001435809.1"/>
</dbReference>
<dbReference type="SMR" id="A0CCD2"/>
<dbReference type="FunCoup" id="A0CCD2">
    <property type="interactions" value="1048"/>
</dbReference>
<dbReference type="STRING" id="5888.A0CCD2"/>
<dbReference type="EnsemblProtists" id="CAK68449">
    <property type="protein sequence ID" value="CAK68449"/>
    <property type="gene ID" value="GSPATT00037234001"/>
</dbReference>
<dbReference type="GeneID" id="5021631"/>
<dbReference type="KEGG" id="ptm:GSPATT00037234001"/>
<dbReference type="eggNOG" id="KOG0372">
    <property type="taxonomic scope" value="Eukaryota"/>
</dbReference>
<dbReference type="HOGENOM" id="CLU_004962_8_1_1"/>
<dbReference type="InParanoid" id="A0CCD2"/>
<dbReference type="OMA" id="QSTMPID"/>
<dbReference type="OrthoDB" id="1930084at2759"/>
<dbReference type="Proteomes" id="UP000000600">
    <property type="component" value="Partially assembled WGS sequence"/>
</dbReference>
<dbReference type="GO" id="GO:0005737">
    <property type="term" value="C:cytoplasm"/>
    <property type="evidence" value="ECO:0000318"/>
    <property type="project" value="GO_Central"/>
</dbReference>
<dbReference type="GO" id="GO:0005634">
    <property type="term" value="C:nucleus"/>
    <property type="evidence" value="ECO:0000318"/>
    <property type="project" value="GO_Central"/>
</dbReference>
<dbReference type="GO" id="GO:0046872">
    <property type="term" value="F:metal ion binding"/>
    <property type="evidence" value="ECO:0007669"/>
    <property type="project" value="UniProtKB-KW"/>
</dbReference>
<dbReference type="GO" id="GO:0004722">
    <property type="term" value="F:protein serine/threonine phosphatase activity"/>
    <property type="evidence" value="ECO:0000318"/>
    <property type="project" value="GO_Central"/>
</dbReference>
<dbReference type="GO" id="GO:0000724">
    <property type="term" value="P:double-strand break repair via homologous recombination"/>
    <property type="evidence" value="ECO:0000318"/>
    <property type="project" value="GO_Central"/>
</dbReference>
<dbReference type="CDD" id="cd07415">
    <property type="entry name" value="MPP_PP2A_PP4_PP6"/>
    <property type="match status" value="1"/>
</dbReference>
<dbReference type="FunFam" id="3.60.21.10:FF:000010">
    <property type="entry name" value="Serine/threonine-protein phosphatase"/>
    <property type="match status" value="1"/>
</dbReference>
<dbReference type="Gene3D" id="3.60.21.10">
    <property type="match status" value="1"/>
</dbReference>
<dbReference type="InterPro" id="IPR004843">
    <property type="entry name" value="Calcineurin-like_PHP_ApaH"/>
</dbReference>
<dbReference type="InterPro" id="IPR029052">
    <property type="entry name" value="Metallo-depent_PP-like"/>
</dbReference>
<dbReference type="InterPro" id="IPR047129">
    <property type="entry name" value="PPA2-like"/>
</dbReference>
<dbReference type="InterPro" id="IPR006186">
    <property type="entry name" value="Ser/Thr-sp_prot-phosphatase"/>
</dbReference>
<dbReference type="PANTHER" id="PTHR45619">
    <property type="entry name" value="SERINE/THREONINE-PROTEIN PHOSPHATASE PP2A-RELATED"/>
    <property type="match status" value="1"/>
</dbReference>
<dbReference type="Pfam" id="PF00149">
    <property type="entry name" value="Metallophos"/>
    <property type="match status" value="1"/>
</dbReference>
<dbReference type="PRINTS" id="PR00114">
    <property type="entry name" value="STPHPHTASE"/>
</dbReference>
<dbReference type="SMART" id="SM00156">
    <property type="entry name" value="PP2Ac"/>
    <property type="match status" value="1"/>
</dbReference>
<dbReference type="SUPFAM" id="SSF56300">
    <property type="entry name" value="Metallo-dependent phosphatases"/>
    <property type="match status" value="1"/>
</dbReference>
<dbReference type="PROSITE" id="PS00125">
    <property type="entry name" value="SER_THR_PHOSPHATASE"/>
    <property type="match status" value="1"/>
</dbReference>
<name>PPX4_PARTE</name>
<proteinExistence type="inferred from homology"/>
<feature type="chain" id="PRO_0000308176" description="Serine/threonine-protein phosphatase PP-X homolog 4">
    <location>
        <begin position="1"/>
        <end position="306"/>
    </location>
</feature>
<feature type="active site" description="Proton donor" evidence="1">
    <location>
        <position position="114"/>
    </location>
</feature>
<feature type="binding site" evidence="1">
    <location>
        <position position="53"/>
    </location>
    <ligand>
        <name>Mn(2+)</name>
        <dbReference type="ChEBI" id="CHEBI:29035"/>
        <label>1</label>
    </ligand>
</feature>
<feature type="binding site" evidence="1">
    <location>
        <position position="55"/>
    </location>
    <ligand>
        <name>Mn(2+)</name>
        <dbReference type="ChEBI" id="CHEBI:29035"/>
        <label>1</label>
    </ligand>
</feature>
<feature type="binding site" evidence="1">
    <location>
        <position position="81"/>
    </location>
    <ligand>
        <name>Mn(2+)</name>
        <dbReference type="ChEBI" id="CHEBI:29035"/>
        <label>1</label>
    </ligand>
</feature>
<feature type="binding site" evidence="1">
    <location>
        <position position="81"/>
    </location>
    <ligand>
        <name>Mn(2+)</name>
        <dbReference type="ChEBI" id="CHEBI:29035"/>
        <label>2</label>
    </ligand>
</feature>
<feature type="binding site" evidence="1">
    <location>
        <position position="113"/>
    </location>
    <ligand>
        <name>Mn(2+)</name>
        <dbReference type="ChEBI" id="CHEBI:29035"/>
        <label>2</label>
    </ligand>
</feature>
<feature type="binding site" evidence="1">
    <location>
        <position position="163"/>
    </location>
    <ligand>
        <name>Mn(2+)</name>
        <dbReference type="ChEBI" id="CHEBI:29035"/>
        <label>2</label>
    </ligand>
</feature>
<feature type="binding site" evidence="1">
    <location>
        <position position="237"/>
    </location>
    <ligand>
        <name>Mn(2+)</name>
        <dbReference type="ChEBI" id="CHEBI:29035"/>
        <label>2</label>
    </ligand>
</feature>
<sequence>MSQSDLDRQIAQLRNCENITEGEVKALCTKAREILVEESNVQRVDAPVTICGDIHGQFFDLMELFKVGGDCPDTNYLFLGDFVDRGFNSVETFLLLLALKVRYPDRITLIRGNHESRQITQVYGFYDECLRKYGSLNVWRYCTDIFDYLSLAAVIEEKIFCVHGGLSPSIKTMDDIRAIDRKQEVPHDGAMCDLMWSDPDEIEGWNLSPRGAGYLFGGDVVDDFNRKNNIELICRAHQLVMEGYRVMFNEQLVTVWSAPNYCYRCGNVASILELDENLAKSYKIFEAAPQENRGLPAKKPIPDYFL</sequence>
<reference key="1">
    <citation type="journal article" date="2006" name="Nature">
        <title>Global trends of whole-genome duplications revealed by the ciliate Paramecium tetraurelia.</title>
        <authorList>
            <person name="Aury J.-M."/>
            <person name="Jaillon O."/>
            <person name="Duret L."/>
            <person name="Noel B."/>
            <person name="Jubin C."/>
            <person name="Porcel B.M."/>
            <person name="Segurens B."/>
            <person name="Daubin V."/>
            <person name="Anthouard V."/>
            <person name="Aiach N."/>
            <person name="Arnaiz O."/>
            <person name="Billaut A."/>
            <person name="Beisson J."/>
            <person name="Blanc I."/>
            <person name="Bouhouche K."/>
            <person name="Camara F."/>
            <person name="Duharcourt S."/>
            <person name="Guigo R."/>
            <person name="Gogendeau D."/>
            <person name="Katinka M."/>
            <person name="Keller A.-M."/>
            <person name="Kissmehl R."/>
            <person name="Klotz C."/>
            <person name="Koll F."/>
            <person name="Le Mouel A."/>
            <person name="Lepere G."/>
            <person name="Malinsky S."/>
            <person name="Nowacki M."/>
            <person name="Nowak J.K."/>
            <person name="Plattner H."/>
            <person name="Poulain J."/>
            <person name="Ruiz F."/>
            <person name="Serrano V."/>
            <person name="Zagulski M."/>
            <person name="Dessen P."/>
            <person name="Betermier M."/>
            <person name="Weissenbach J."/>
            <person name="Scarpelli C."/>
            <person name="Schaechter V."/>
            <person name="Sperling L."/>
            <person name="Meyer E."/>
            <person name="Cohen J."/>
            <person name="Wincker P."/>
        </authorList>
    </citation>
    <scope>NUCLEOTIDE SEQUENCE [LARGE SCALE GENOMIC DNA]</scope>
    <source>
        <strain>Stock d4-2</strain>
    </source>
</reference>
<comment type="catalytic activity">
    <reaction>
        <text>O-phospho-L-seryl-[protein] + H2O = L-seryl-[protein] + phosphate</text>
        <dbReference type="Rhea" id="RHEA:20629"/>
        <dbReference type="Rhea" id="RHEA-COMP:9863"/>
        <dbReference type="Rhea" id="RHEA-COMP:11604"/>
        <dbReference type="ChEBI" id="CHEBI:15377"/>
        <dbReference type="ChEBI" id="CHEBI:29999"/>
        <dbReference type="ChEBI" id="CHEBI:43474"/>
        <dbReference type="ChEBI" id="CHEBI:83421"/>
        <dbReference type="EC" id="3.1.3.16"/>
    </reaction>
</comment>
<comment type="catalytic activity">
    <reaction>
        <text>O-phospho-L-threonyl-[protein] + H2O = L-threonyl-[protein] + phosphate</text>
        <dbReference type="Rhea" id="RHEA:47004"/>
        <dbReference type="Rhea" id="RHEA-COMP:11060"/>
        <dbReference type="Rhea" id="RHEA-COMP:11605"/>
        <dbReference type="ChEBI" id="CHEBI:15377"/>
        <dbReference type="ChEBI" id="CHEBI:30013"/>
        <dbReference type="ChEBI" id="CHEBI:43474"/>
        <dbReference type="ChEBI" id="CHEBI:61977"/>
        <dbReference type="EC" id="3.1.3.16"/>
    </reaction>
</comment>
<comment type="cofactor">
    <cofactor evidence="1">
        <name>Mn(2+)</name>
        <dbReference type="ChEBI" id="CHEBI:29035"/>
    </cofactor>
    <text evidence="1">Binds 2 manganese ions per subunit.</text>
</comment>
<comment type="similarity">
    <text evidence="2">Belongs to the PPP phosphatase family. PP-4 (PP-X) subfamily.</text>
</comment>
<keyword id="KW-0378">Hydrolase</keyword>
<keyword id="KW-0464">Manganese</keyword>
<keyword id="KW-0479">Metal-binding</keyword>
<keyword id="KW-0904">Protein phosphatase</keyword>
<keyword id="KW-1185">Reference proteome</keyword>
<evidence type="ECO:0000250" key="1"/>
<evidence type="ECO:0000305" key="2"/>
<protein>
    <recommendedName>
        <fullName>Serine/threonine-protein phosphatase PP-X homolog 4</fullName>
        <ecNumber>3.1.3.16</ecNumber>
    </recommendedName>
</protein>
<gene>
    <name type="primary">Ppx4</name>
    <name type="ORF">GSPATT00037234001</name>
</gene>
<organism>
    <name type="scientific">Paramecium tetraurelia</name>
    <dbReference type="NCBI Taxonomy" id="5888"/>
    <lineage>
        <taxon>Eukaryota</taxon>
        <taxon>Sar</taxon>
        <taxon>Alveolata</taxon>
        <taxon>Ciliophora</taxon>
        <taxon>Intramacronucleata</taxon>
        <taxon>Oligohymenophorea</taxon>
        <taxon>Peniculida</taxon>
        <taxon>Parameciidae</taxon>
        <taxon>Paramecium</taxon>
    </lineage>
</organism>
<accession>A0CCD2</accession>